<organism>
    <name type="scientific">Burkholderia mallei (strain SAVP1)</name>
    <dbReference type="NCBI Taxonomy" id="320388"/>
    <lineage>
        <taxon>Bacteria</taxon>
        <taxon>Pseudomonadati</taxon>
        <taxon>Pseudomonadota</taxon>
        <taxon>Betaproteobacteria</taxon>
        <taxon>Burkholderiales</taxon>
        <taxon>Burkholderiaceae</taxon>
        <taxon>Burkholderia</taxon>
        <taxon>pseudomallei group</taxon>
    </lineage>
</organism>
<feature type="chain" id="PRO_1000006459" description="tRNA (guanine-N(1)-)-methyltransferase">
    <location>
        <begin position="1"/>
        <end position="264"/>
    </location>
</feature>
<feature type="binding site" evidence="1">
    <location>
        <position position="125"/>
    </location>
    <ligand>
        <name>S-adenosyl-L-methionine</name>
        <dbReference type="ChEBI" id="CHEBI:59789"/>
    </ligand>
</feature>
<feature type="binding site" evidence="1">
    <location>
        <begin position="145"/>
        <end position="150"/>
    </location>
    <ligand>
        <name>S-adenosyl-L-methionine</name>
        <dbReference type="ChEBI" id="CHEBI:59789"/>
    </ligand>
</feature>
<protein>
    <recommendedName>
        <fullName evidence="1">tRNA (guanine-N(1)-)-methyltransferase</fullName>
        <ecNumber evidence="1">2.1.1.228</ecNumber>
    </recommendedName>
    <alternativeName>
        <fullName evidence="1">M1G-methyltransferase</fullName>
    </alternativeName>
    <alternativeName>
        <fullName evidence="1">tRNA [GM37] methyltransferase</fullName>
    </alternativeName>
</protein>
<name>TRMD_BURMS</name>
<accession>A1V6J2</accession>
<evidence type="ECO:0000255" key="1">
    <source>
        <dbReference type="HAMAP-Rule" id="MF_00605"/>
    </source>
</evidence>
<reference key="1">
    <citation type="journal article" date="2010" name="Genome Biol. Evol.">
        <title>Continuing evolution of Burkholderia mallei through genome reduction and large-scale rearrangements.</title>
        <authorList>
            <person name="Losada L."/>
            <person name="Ronning C.M."/>
            <person name="DeShazer D."/>
            <person name="Woods D."/>
            <person name="Fedorova N."/>
            <person name="Kim H.S."/>
            <person name="Shabalina S.A."/>
            <person name="Pearson T.R."/>
            <person name="Brinkac L."/>
            <person name="Tan P."/>
            <person name="Nandi T."/>
            <person name="Crabtree J."/>
            <person name="Badger J."/>
            <person name="Beckstrom-Sternberg S."/>
            <person name="Saqib M."/>
            <person name="Schutzer S.E."/>
            <person name="Keim P."/>
            <person name="Nierman W.C."/>
        </authorList>
    </citation>
    <scope>NUCLEOTIDE SEQUENCE [LARGE SCALE GENOMIC DNA]</scope>
    <source>
        <strain>SAVP1</strain>
    </source>
</reference>
<proteinExistence type="inferred from homology"/>
<dbReference type="EC" id="2.1.1.228" evidence="1"/>
<dbReference type="EMBL" id="CP000526">
    <property type="protein sequence ID" value="ABM51754.1"/>
    <property type="molecule type" value="Genomic_DNA"/>
</dbReference>
<dbReference type="RefSeq" id="WP_004189914.1">
    <property type="nucleotide sequence ID" value="NC_008785.1"/>
</dbReference>
<dbReference type="SMR" id="A1V6J2"/>
<dbReference type="GeneID" id="93061077"/>
<dbReference type="KEGG" id="bmv:BMASAVP1_A2543"/>
<dbReference type="HOGENOM" id="CLU_047363_0_2_4"/>
<dbReference type="GO" id="GO:0005829">
    <property type="term" value="C:cytosol"/>
    <property type="evidence" value="ECO:0007669"/>
    <property type="project" value="TreeGrafter"/>
</dbReference>
<dbReference type="GO" id="GO:0052906">
    <property type="term" value="F:tRNA (guanine(37)-N1)-methyltransferase activity"/>
    <property type="evidence" value="ECO:0007669"/>
    <property type="project" value="UniProtKB-UniRule"/>
</dbReference>
<dbReference type="GO" id="GO:0002939">
    <property type="term" value="P:tRNA N1-guanine methylation"/>
    <property type="evidence" value="ECO:0007669"/>
    <property type="project" value="TreeGrafter"/>
</dbReference>
<dbReference type="CDD" id="cd18080">
    <property type="entry name" value="TrmD-like"/>
    <property type="match status" value="1"/>
</dbReference>
<dbReference type="FunFam" id="1.10.1270.20:FF:000001">
    <property type="entry name" value="tRNA (guanine-N(1)-)-methyltransferase"/>
    <property type="match status" value="1"/>
</dbReference>
<dbReference type="FunFam" id="3.40.1280.10:FF:000001">
    <property type="entry name" value="tRNA (guanine-N(1)-)-methyltransferase"/>
    <property type="match status" value="1"/>
</dbReference>
<dbReference type="Gene3D" id="3.40.1280.10">
    <property type="match status" value="1"/>
</dbReference>
<dbReference type="Gene3D" id="1.10.1270.20">
    <property type="entry name" value="tRNA(m1g37)methyltransferase, domain 2"/>
    <property type="match status" value="1"/>
</dbReference>
<dbReference type="HAMAP" id="MF_00605">
    <property type="entry name" value="TrmD"/>
    <property type="match status" value="1"/>
</dbReference>
<dbReference type="InterPro" id="IPR029028">
    <property type="entry name" value="Alpha/beta_knot_MTases"/>
</dbReference>
<dbReference type="InterPro" id="IPR023148">
    <property type="entry name" value="tRNA_m1G_MeTrfase_C_sf"/>
</dbReference>
<dbReference type="InterPro" id="IPR002649">
    <property type="entry name" value="tRNA_m1G_MeTrfase_TrmD"/>
</dbReference>
<dbReference type="InterPro" id="IPR029026">
    <property type="entry name" value="tRNA_m1G_MTases_N"/>
</dbReference>
<dbReference type="InterPro" id="IPR016009">
    <property type="entry name" value="tRNA_MeTrfase_TRMD/TRM10"/>
</dbReference>
<dbReference type="NCBIfam" id="NF000648">
    <property type="entry name" value="PRK00026.1"/>
    <property type="match status" value="1"/>
</dbReference>
<dbReference type="NCBIfam" id="TIGR00088">
    <property type="entry name" value="trmD"/>
    <property type="match status" value="1"/>
</dbReference>
<dbReference type="PANTHER" id="PTHR46417">
    <property type="entry name" value="TRNA (GUANINE-N(1)-)-METHYLTRANSFERASE"/>
    <property type="match status" value="1"/>
</dbReference>
<dbReference type="PANTHER" id="PTHR46417:SF1">
    <property type="entry name" value="TRNA (GUANINE-N(1)-)-METHYLTRANSFERASE"/>
    <property type="match status" value="1"/>
</dbReference>
<dbReference type="Pfam" id="PF01746">
    <property type="entry name" value="tRNA_m1G_MT"/>
    <property type="match status" value="1"/>
</dbReference>
<dbReference type="PIRSF" id="PIRSF000386">
    <property type="entry name" value="tRNA_mtase"/>
    <property type="match status" value="1"/>
</dbReference>
<dbReference type="SUPFAM" id="SSF75217">
    <property type="entry name" value="alpha/beta knot"/>
    <property type="match status" value="1"/>
</dbReference>
<comment type="function">
    <text evidence="1">Specifically methylates guanosine-37 in various tRNAs.</text>
</comment>
<comment type="catalytic activity">
    <reaction evidence="1">
        <text>guanosine(37) in tRNA + S-adenosyl-L-methionine = N(1)-methylguanosine(37) in tRNA + S-adenosyl-L-homocysteine + H(+)</text>
        <dbReference type="Rhea" id="RHEA:36899"/>
        <dbReference type="Rhea" id="RHEA-COMP:10145"/>
        <dbReference type="Rhea" id="RHEA-COMP:10147"/>
        <dbReference type="ChEBI" id="CHEBI:15378"/>
        <dbReference type="ChEBI" id="CHEBI:57856"/>
        <dbReference type="ChEBI" id="CHEBI:59789"/>
        <dbReference type="ChEBI" id="CHEBI:73542"/>
        <dbReference type="ChEBI" id="CHEBI:74269"/>
        <dbReference type="EC" id="2.1.1.228"/>
    </reaction>
</comment>
<comment type="subunit">
    <text evidence="1">Homodimer.</text>
</comment>
<comment type="subcellular location">
    <subcellularLocation>
        <location evidence="1">Cytoplasm</location>
    </subcellularLocation>
</comment>
<comment type="similarity">
    <text evidence="1">Belongs to the RNA methyltransferase TrmD family.</text>
</comment>
<keyword id="KW-0963">Cytoplasm</keyword>
<keyword id="KW-0489">Methyltransferase</keyword>
<keyword id="KW-0949">S-adenosyl-L-methionine</keyword>
<keyword id="KW-0808">Transferase</keyword>
<keyword id="KW-0819">tRNA processing</keyword>
<sequence>MDEATQSAIQFDVVTLFPEMFRALTDWGITSRAVKQGRFGLRTWNPRDFTTDNYRTVDDRPYGGGPGMVMLAKPLEAAIGAAKAAQAAQGVATSRVVMMSPQGAPLTHERVARMAAEPGVVLLCGRYEAIDQRLIDRCVDEELSLGDFVLSGGELPAMALMDAVVRLLPGVLNDAQSAVQDSFADGLLDCPHYTRPEEYEGVRVPDVLLGGHHAEIERWRRQEALRNTIAKRPDLIARARREKLLSRADEAWLASLAKEAKQAS</sequence>
<gene>
    <name evidence="1" type="primary">trmD</name>
    <name type="ordered locus">BMASAVP1_A2543</name>
</gene>